<gene>
    <name evidence="1" type="primary">xpt</name>
    <name type="ordered locus">SA0373</name>
</gene>
<feature type="chain" id="PRO_0000339750" description="Xanthine phosphoribosyltransferase">
    <location>
        <begin position="1"/>
        <end position="192"/>
    </location>
</feature>
<feature type="binding site" evidence="1">
    <location>
        <position position="20"/>
    </location>
    <ligand>
        <name>xanthine</name>
        <dbReference type="ChEBI" id="CHEBI:17712"/>
    </ligand>
</feature>
<feature type="binding site" evidence="1">
    <location>
        <position position="27"/>
    </location>
    <ligand>
        <name>xanthine</name>
        <dbReference type="ChEBI" id="CHEBI:17712"/>
    </ligand>
</feature>
<feature type="binding site" evidence="1">
    <location>
        <begin position="128"/>
        <end position="132"/>
    </location>
    <ligand>
        <name>5-phospho-alpha-D-ribose 1-diphosphate</name>
        <dbReference type="ChEBI" id="CHEBI:58017"/>
    </ligand>
</feature>
<feature type="binding site" evidence="1">
    <location>
        <position position="156"/>
    </location>
    <ligand>
        <name>xanthine</name>
        <dbReference type="ChEBI" id="CHEBI:17712"/>
    </ligand>
</feature>
<organism>
    <name type="scientific">Staphylococcus aureus (strain N315)</name>
    <dbReference type="NCBI Taxonomy" id="158879"/>
    <lineage>
        <taxon>Bacteria</taxon>
        <taxon>Bacillati</taxon>
        <taxon>Bacillota</taxon>
        <taxon>Bacilli</taxon>
        <taxon>Bacillales</taxon>
        <taxon>Staphylococcaceae</taxon>
        <taxon>Staphylococcus</taxon>
    </lineage>
</organism>
<keyword id="KW-0963">Cytoplasm</keyword>
<keyword id="KW-0328">Glycosyltransferase</keyword>
<keyword id="KW-0660">Purine salvage</keyword>
<keyword id="KW-0808">Transferase</keyword>
<name>XPT_STAAN</name>
<dbReference type="EC" id="2.4.2.22" evidence="1"/>
<dbReference type="EMBL" id="BA000018">
    <property type="protein sequence ID" value="BAB41600.1"/>
    <property type="molecule type" value="Genomic_DNA"/>
</dbReference>
<dbReference type="PIR" id="E89805">
    <property type="entry name" value="E89805"/>
</dbReference>
<dbReference type="RefSeq" id="WP_000421410.1">
    <property type="nucleotide sequence ID" value="NC_002745.2"/>
</dbReference>
<dbReference type="SMR" id="Q7A7I5"/>
<dbReference type="EnsemblBacteria" id="BAB41600">
    <property type="protein sequence ID" value="BAB41600"/>
    <property type="gene ID" value="BAB41600"/>
</dbReference>
<dbReference type="GeneID" id="66838694"/>
<dbReference type="KEGG" id="sau:SA0373"/>
<dbReference type="HOGENOM" id="CLU_099015_0_0_9"/>
<dbReference type="UniPathway" id="UPA00602">
    <property type="reaction ID" value="UER00658"/>
</dbReference>
<dbReference type="GO" id="GO:0005737">
    <property type="term" value="C:cytoplasm"/>
    <property type="evidence" value="ECO:0007669"/>
    <property type="project" value="UniProtKB-SubCell"/>
</dbReference>
<dbReference type="GO" id="GO:0000310">
    <property type="term" value="F:xanthine phosphoribosyltransferase activity"/>
    <property type="evidence" value="ECO:0007669"/>
    <property type="project" value="UniProtKB-UniRule"/>
</dbReference>
<dbReference type="GO" id="GO:0006166">
    <property type="term" value="P:purine ribonucleoside salvage"/>
    <property type="evidence" value="ECO:0007669"/>
    <property type="project" value="UniProtKB-KW"/>
</dbReference>
<dbReference type="GO" id="GO:0046110">
    <property type="term" value="P:xanthine metabolic process"/>
    <property type="evidence" value="ECO:0007669"/>
    <property type="project" value="InterPro"/>
</dbReference>
<dbReference type="GO" id="GO:0032265">
    <property type="term" value="P:XMP salvage"/>
    <property type="evidence" value="ECO:0007669"/>
    <property type="project" value="UniProtKB-UniRule"/>
</dbReference>
<dbReference type="CDD" id="cd06223">
    <property type="entry name" value="PRTases_typeI"/>
    <property type="match status" value="1"/>
</dbReference>
<dbReference type="Gene3D" id="3.40.50.2020">
    <property type="match status" value="1"/>
</dbReference>
<dbReference type="HAMAP" id="MF_01184">
    <property type="entry name" value="XPRTase"/>
    <property type="match status" value="1"/>
</dbReference>
<dbReference type="InterPro" id="IPR000836">
    <property type="entry name" value="PRibTrfase_dom"/>
</dbReference>
<dbReference type="InterPro" id="IPR029057">
    <property type="entry name" value="PRTase-like"/>
</dbReference>
<dbReference type="InterPro" id="IPR050118">
    <property type="entry name" value="Pur/Pyrimidine_PRTase"/>
</dbReference>
<dbReference type="InterPro" id="IPR010079">
    <property type="entry name" value="Xanthine_PRibTrfase"/>
</dbReference>
<dbReference type="NCBIfam" id="NF006671">
    <property type="entry name" value="PRK09219.1"/>
    <property type="match status" value="1"/>
</dbReference>
<dbReference type="NCBIfam" id="TIGR01744">
    <property type="entry name" value="XPRTase"/>
    <property type="match status" value="1"/>
</dbReference>
<dbReference type="PANTHER" id="PTHR43864">
    <property type="entry name" value="HYPOXANTHINE/GUANINE PHOSPHORIBOSYLTRANSFERASE"/>
    <property type="match status" value="1"/>
</dbReference>
<dbReference type="PANTHER" id="PTHR43864:SF1">
    <property type="entry name" value="XANTHINE PHOSPHORIBOSYLTRANSFERASE"/>
    <property type="match status" value="1"/>
</dbReference>
<dbReference type="SUPFAM" id="SSF53271">
    <property type="entry name" value="PRTase-like"/>
    <property type="match status" value="1"/>
</dbReference>
<accession>Q7A7I5</accession>
<evidence type="ECO:0000255" key="1">
    <source>
        <dbReference type="HAMAP-Rule" id="MF_01184"/>
    </source>
</evidence>
<sequence>MELLGQKVKEDGVVIDEKILKVDGFLNHQIDAKLMNEVGRTFYEQFKDKGITKILTIEASGIAPAIMAALHFDVPCLFAKKAKPSTLTDGYYETSIHSFTKNKTSTVIVSKEFLSEEDTVLIIDDFLANGDASLGLYDIAQQANAKTAGIGIVVEKSFQNGHQRLEEAGLTVSSLCKVASLEGNKVTLVGEE</sequence>
<comment type="function">
    <text evidence="1">Converts the preformed base xanthine, a product of nucleic acid breakdown, to xanthosine 5'-monophosphate (XMP), so it can be reused for RNA or DNA synthesis.</text>
</comment>
<comment type="catalytic activity">
    <reaction evidence="1">
        <text>XMP + diphosphate = xanthine + 5-phospho-alpha-D-ribose 1-diphosphate</text>
        <dbReference type="Rhea" id="RHEA:10800"/>
        <dbReference type="ChEBI" id="CHEBI:17712"/>
        <dbReference type="ChEBI" id="CHEBI:33019"/>
        <dbReference type="ChEBI" id="CHEBI:57464"/>
        <dbReference type="ChEBI" id="CHEBI:58017"/>
        <dbReference type="EC" id="2.4.2.22"/>
    </reaction>
</comment>
<comment type="pathway">
    <text evidence="1">Purine metabolism; XMP biosynthesis via salvage pathway; XMP from xanthine: step 1/1.</text>
</comment>
<comment type="subunit">
    <text evidence="1">Homodimer.</text>
</comment>
<comment type="subcellular location">
    <subcellularLocation>
        <location evidence="1">Cytoplasm</location>
    </subcellularLocation>
</comment>
<comment type="similarity">
    <text evidence="1">Belongs to the purine/pyrimidine phosphoribosyltransferase family. Xpt subfamily.</text>
</comment>
<protein>
    <recommendedName>
        <fullName evidence="1">Xanthine phosphoribosyltransferase</fullName>
        <shortName evidence="1">XPRTase</shortName>
        <ecNumber evidence="1">2.4.2.22</ecNumber>
    </recommendedName>
</protein>
<proteinExistence type="evidence at protein level"/>
<reference key="1">
    <citation type="journal article" date="2001" name="Lancet">
        <title>Whole genome sequencing of meticillin-resistant Staphylococcus aureus.</title>
        <authorList>
            <person name="Kuroda M."/>
            <person name="Ohta T."/>
            <person name="Uchiyama I."/>
            <person name="Baba T."/>
            <person name="Yuzawa H."/>
            <person name="Kobayashi I."/>
            <person name="Cui L."/>
            <person name="Oguchi A."/>
            <person name="Aoki K."/>
            <person name="Nagai Y."/>
            <person name="Lian J.-Q."/>
            <person name="Ito T."/>
            <person name="Kanamori M."/>
            <person name="Matsumaru H."/>
            <person name="Maruyama A."/>
            <person name="Murakami H."/>
            <person name="Hosoyama A."/>
            <person name="Mizutani-Ui Y."/>
            <person name="Takahashi N.K."/>
            <person name="Sawano T."/>
            <person name="Inoue R."/>
            <person name="Kaito C."/>
            <person name="Sekimizu K."/>
            <person name="Hirakawa H."/>
            <person name="Kuhara S."/>
            <person name="Goto S."/>
            <person name="Yabuzaki J."/>
            <person name="Kanehisa M."/>
            <person name="Yamashita A."/>
            <person name="Oshima K."/>
            <person name="Furuya K."/>
            <person name="Yoshino C."/>
            <person name="Shiba T."/>
            <person name="Hattori M."/>
            <person name="Ogasawara N."/>
            <person name="Hayashi H."/>
            <person name="Hiramatsu K."/>
        </authorList>
    </citation>
    <scope>NUCLEOTIDE SEQUENCE [LARGE SCALE GENOMIC DNA]</scope>
    <source>
        <strain>N315</strain>
    </source>
</reference>
<reference key="2">
    <citation type="submission" date="2007-10" db="UniProtKB">
        <title>Shotgun proteomic analysis of total and membrane protein extracts of S. aureus strain N315.</title>
        <authorList>
            <person name="Vaezzadeh A.R."/>
            <person name="Deshusses J."/>
            <person name="Lescuyer P."/>
            <person name="Hochstrasser D.F."/>
        </authorList>
    </citation>
    <scope>IDENTIFICATION BY MASS SPECTROMETRY [LARGE SCALE ANALYSIS]</scope>
    <source>
        <strain>N315</strain>
    </source>
</reference>